<organism>
    <name type="scientific">Mus musculus</name>
    <name type="common">Mouse</name>
    <dbReference type="NCBI Taxonomy" id="10090"/>
    <lineage>
        <taxon>Eukaryota</taxon>
        <taxon>Metazoa</taxon>
        <taxon>Chordata</taxon>
        <taxon>Craniata</taxon>
        <taxon>Vertebrata</taxon>
        <taxon>Euteleostomi</taxon>
        <taxon>Mammalia</taxon>
        <taxon>Eutheria</taxon>
        <taxon>Euarchontoglires</taxon>
        <taxon>Glires</taxon>
        <taxon>Rodentia</taxon>
        <taxon>Myomorpha</taxon>
        <taxon>Muroidea</taxon>
        <taxon>Muridae</taxon>
        <taxon>Murinae</taxon>
        <taxon>Mus</taxon>
        <taxon>Mus</taxon>
    </lineage>
</organism>
<feature type="initiator methionine" description="Removed" evidence="13">
    <location>
        <position position="1"/>
    </location>
</feature>
<feature type="chain" id="PRO_0000124618" description="Aldo-keto reductase family 1 member A1">
    <location>
        <begin position="2"/>
        <end position="325"/>
    </location>
</feature>
<feature type="active site" description="Proton donor" evidence="2">
    <location>
        <position position="50"/>
    </location>
</feature>
<feature type="binding site" evidence="1">
    <location>
        <begin position="11"/>
        <end position="20"/>
    </location>
    <ligand>
        <name>NADP(+)</name>
        <dbReference type="ChEBI" id="CHEBI:58349"/>
    </ligand>
</feature>
<feature type="binding site" evidence="3">
    <location>
        <position position="21"/>
    </location>
    <ligand>
        <name>NADP(+)</name>
        <dbReference type="ChEBI" id="CHEBI:58349"/>
    </ligand>
</feature>
<feature type="binding site" evidence="3">
    <location>
        <position position="22"/>
    </location>
    <ligand>
        <name>NADP(+)</name>
        <dbReference type="ChEBI" id="CHEBI:58349"/>
    </ligand>
</feature>
<feature type="binding site" evidence="3">
    <location>
        <position position="45"/>
    </location>
    <ligand>
        <name>NADP(+)</name>
        <dbReference type="ChEBI" id="CHEBI:58349"/>
    </ligand>
</feature>
<feature type="binding site" evidence="3">
    <location>
        <position position="162"/>
    </location>
    <ligand>
        <name>NADP(+)</name>
        <dbReference type="ChEBI" id="CHEBI:58349"/>
    </ligand>
</feature>
<feature type="binding site" evidence="3">
    <location>
        <position position="163"/>
    </location>
    <ligand>
        <name>NADP(+)</name>
        <dbReference type="ChEBI" id="CHEBI:58349"/>
    </ligand>
</feature>
<feature type="binding site" evidence="3">
    <location>
        <position position="211"/>
    </location>
    <ligand>
        <name>NADP(+)</name>
        <dbReference type="ChEBI" id="CHEBI:58349"/>
    </ligand>
</feature>
<feature type="binding site" evidence="3">
    <location>
        <position position="213"/>
    </location>
    <ligand>
        <name>NADP(+)</name>
        <dbReference type="ChEBI" id="CHEBI:58349"/>
    </ligand>
</feature>
<feature type="binding site" evidence="3">
    <location>
        <position position="215"/>
    </location>
    <ligand>
        <name>NADP(+)</name>
        <dbReference type="ChEBI" id="CHEBI:58349"/>
    </ligand>
</feature>
<feature type="binding site" evidence="3">
    <location>
        <position position="216"/>
    </location>
    <ligand>
        <name>NADP(+)</name>
        <dbReference type="ChEBI" id="CHEBI:58349"/>
    </ligand>
</feature>
<feature type="binding site" evidence="3">
    <location>
        <position position="263"/>
    </location>
    <ligand>
        <name>NADP(+)</name>
        <dbReference type="ChEBI" id="CHEBI:58349"/>
    </ligand>
</feature>
<feature type="binding site" evidence="3">
    <location>
        <position position="264"/>
    </location>
    <ligand>
        <name>NADP(+)</name>
        <dbReference type="ChEBI" id="CHEBI:58349"/>
    </ligand>
</feature>
<feature type="binding site" evidence="3">
    <location>
        <position position="265"/>
    </location>
    <ligand>
        <name>NADP(+)</name>
        <dbReference type="ChEBI" id="CHEBI:58349"/>
    </ligand>
</feature>
<feature type="binding site" evidence="3">
    <location>
        <position position="269"/>
    </location>
    <ligand>
        <name>NADP(+)</name>
        <dbReference type="ChEBI" id="CHEBI:58349"/>
    </ligand>
</feature>
<feature type="binding site" evidence="3">
    <location>
        <position position="272"/>
    </location>
    <ligand>
        <name>NADP(+)</name>
        <dbReference type="ChEBI" id="CHEBI:58349"/>
    </ligand>
</feature>
<feature type="binding site" evidence="3">
    <location>
        <position position="273"/>
    </location>
    <ligand>
        <name>NADP(+)</name>
        <dbReference type="ChEBI" id="CHEBI:58349"/>
    </ligand>
</feature>
<feature type="site" description="Lowers pKa of active site Tyr" evidence="2">
    <location>
        <position position="80"/>
    </location>
</feature>
<feature type="modified residue" description="N-acetylthreonine" evidence="13">
    <location>
        <position position="2"/>
    </location>
</feature>
<feature type="modified residue" description="Phosphoserine" evidence="4">
    <location>
        <position position="4"/>
    </location>
</feature>
<feature type="modified residue" description="Phosphoserine" evidence="2">
    <location>
        <position position="38"/>
    </location>
</feature>
<feature type="modified residue" description="N6-acetyllysine; alternate" evidence="19">
    <location>
        <position position="127"/>
    </location>
</feature>
<feature type="modified residue" description="N6-succinyllysine; alternate" evidence="19">
    <location>
        <position position="127"/>
    </location>
</feature>
<feature type="modified residue" description="N6-succinyllysine" evidence="19">
    <location>
        <position position="145"/>
    </location>
</feature>
<feature type="modified residue" description="Phosphoserine" evidence="2">
    <location>
        <position position="211"/>
    </location>
</feature>
<feature type="sequence conflict" description="In Ref. 2; BAB27586." evidence="17" ref="2">
    <original>T</original>
    <variation>A</variation>
    <location>
        <position position="54"/>
    </location>
</feature>
<feature type="sequence conflict" description="In Ref. 2; BAB27915." evidence="17" ref="2">
    <original>L</original>
    <variation>P</variation>
    <location>
        <position position="60"/>
    </location>
</feature>
<feature type="sequence conflict" description="In Ref. 2; BAB27883/BAB27767." evidence="17" ref="2">
    <original>L</original>
    <variation>I</variation>
    <location>
        <position position="95"/>
    </location>
</feature>
<feature type="sequence conflict" description="In Ref. 2; BAB27909." evidence="17" ref="2">
    <original>R</original>
    <variation>L</variation>
    <location>
        <position position="120"/>
    </location>
</feature>
<feature type="sequence conflict" description="In Ref. 2; BAB27437." evidence="17" ref="2">
    <original>E</original>
    <variation>G</variation>
    <location>
        <position position="284"/>
    </location>
</feature>
<feature type="strand" evidence="20">
    <location>
        <begin position="5"/>
        <end position="7"/>
    </location>
</feature>
<feature type="strand" evidence="20">
    <location>
        <begin position="13"/>
        <end position="17"/>
    </location>
</feature>
<feature type="helix" evidence="20">
    <location>
        <begin position="26"/>
        <end position="38"/>
    </location>
</feature>
<feature type="strand" evidence="20">
    <location>
        <begin position="43"/>
        <end position="45"/>
    </location>
</feature>
<feature type="helix" evidence="20">
    <location>
        <begin position="48"/>
        <end position="50"/>
    </location>
</feature>
<feature type="helix" evidence="20">
    <location>
        <begin position="53"/>
        <end position="63"/>
    </location>
</feature>
<feature type="strand" evidence="20">
    <location>
        <begin position="68"/>
        <end position="70"/>
    </location>
</feature>
<feature type="helix" evidence="20">
    <location>
        <begin position="72"/>
        <end position="74"/>
    </location>
</feature>
<feature type="strand" evidence="20">
    <location>
        <begin position="76"/>
        <end position="81"/>
    </location>
</feature>
<feature type="helix" evidence="20">
    <location>
        <begin position="83"/>
        <end position="85"/>
    </location>
</feature>
<feature type="helix" evidence="20">
    <location>
        <begin position="88"/>
        <end position="102"/>
    </location>
</feature>
<feature type="strand" evidence="20">
    <location>
        <begin position="107"/>
        <end position="113"/>
    </location>
</feature>
<feature type="strand" evidence="20">
    <location>
        <begin position="115"/>
        <end position="118"/>
    </location>
</feature>
<feature type="strand" evidence="20">
    <location>
        <begin position="120"/>
        <end position="122"/>
    </location>
</feature>
<feature type="helix" evidence="20">
    <location>
        <begin position="140"/>
        <end position="152"/>
    </location>
</feature>
<feature type="strand" evidence="20">
    <location>
        <begin position="155"/>
        <end position="157"/>
    </location>
</feature>
<feature type="strand" evidence="20">
    <location>
        <begin position="159"/>
        <end position="163"/>
    </location>
</feature>
<feature type="helix" evidence="20">
    <location>
        <begin position="166"/>
        <end position="175"/>
    </location>
</feature>
<feature type="strand" evidence="20">
    <location>
        <begin position="182"/>
        <end position="186"/>
    </location>
</feature>
<feature type="helix" evidence="20">
    <location>
        <begin position="194"/>
        <end position="202"/>
    </location>
</feature>
<feature type="strand" evidence="20">
    <location>
        <begin position="206"/>
        <end position="211"/>
    </location>
</feature>
<feature type="helix" evidence="20">
    <location>
        <begin position="216"/>
        <end position="221"/>
    </location>
</feature>
<feature type="helix" evidence="20">
    <location>
        <begin position="228"/>
        <end position="230"/>
    </location>
</feature>
<feature type="helix" evidence="20">
    <location>
        <begin position="232"/>
        <end position="241"/>
    </location>
</feature>
<feature type="helix" evidence="20">
    <location>
        <begin position="245"/>
        <end position="255"/>
    </location>
</feature>
<feature type="helix" evidence="20">
    <location>
        <begin position="267"/>
        <end position="273"/>
    </location>
</feature>
<feature type="helix" evidence="20">
    <location>
        <begin position="283"/>
        <end position="290"/>
    </location>
</feature>
<feature type="strand" evidence="20">
    <location>
        <begin position="302"/>
        <end position="305"/>
    </location>
</feature>
<feature type="strand" evidence="20">
    <location>
        <begin position="308"/>
        <end position="313"/>
    </location>
</feature>
<sequence>MTASSVLLHTGQKMPLIGLGTWKSEPGQVKAAIKHALSAGYRHIDCASVYGNETEIGEALKESVGSGKAVPREELFVTSKLWNTKHHPEDVEPALRKTLADLQLEYLDLYLMHWPYAFERGDNPFPKNADGTVRYDSTHYKETWKALEVLVAKGLVKALGLSNFNSRQIDDVLSVASVRPAVLQVECHPYLAQNELIAHCHARGLEVTAYSPLGSSDRAWRHPDEPVLLEEPVVLALAEKHGRSPAQILLRWQVQRKVICIPKSINPSRILQNIQVFDFTFSPEEMKQLDALNKNWRYIVPMITVDGKRVPRDAGHPLYPFNDPY</sequence>
<name>AK1A1_MOUSE</name>
<evidence type="ECO:0000250" key="1">
    <source>
        <dbReference type="UniProtKB" id="O60218"/>
    </source>
</evidence>
<evidence type="ECO:0000250" key="2">
    <source>
        <dbReference type="UniProtKB" id="P14550"/>
    </source>
</evidence>
<evidence type="ECO:0000250" key="3">
    <source>
        <dbReference type="UniProtKB" id="P50578"/>
    </source>
</evidence>
<evidence type="ECO:0000250" key="4">
    <source>
        <dbReference type="UniProtKB" id="P51635"/>
    </source>
</evidence>
<evidence type="ECO:0000269" key="5">
    <source>
    </source>
</evidence>
<evidence type="ECO:0000269" key="6">
    <source>
    </source>
</evidence>
<evidence type="ECO:0000269" key="7">
    <source>
    </source>
</evidence>
<evidence type="ECO:0000269" key="8">
    <source>
    </source>
</evidence>
<evidence type="ECO:0000269" key="9">
    <source>
    </source>
</evidence>
<evidence type="ECO:0000269" key="10">
    <source>
    </source>
</evidence>
<evidence type="ECO:0000269" key="11">
    <source>
    </source>
</evidence>
<evidence type="ECO:0000269" key="12">
    <source>
    </source>
</evidence>
<evidence type="ECO:0000269" key="13">
    <source ref="4"/>
</evidence>
<evidence type="ECO:0000303" key="14">
    <source>
    </source>
</evidence>
<evidence type="ECO:0000303" key="15">
    <source>
    </source>
</evidence>
<evidence type="ECO:0000303" key="16">
    <source>
    </source>
</evidence>
<evidence type="ECO:0000305" key="17"/>
<evidence type="ECO:0000312" key="18">
    <source>
        <dbReference type="MGI" id="MGI:1929955"/>
    </source>
</evidence>
<evidence type="ECO:0007744" key="19">
    <source>
    </source>
</evidence>
<evidence type="ECO:0007829" key="20">
    <source>
        <dbReference type="PDB" id="4GAC"/>
    </source>
</evidence>
<gene>
    <name evidence="15 18" type="primary">Akr1a1</name>
    <name evidence="14" type="synonym">Akr1a4</name>
</gene>
<keyword id="KW-0002">3D-structure</keyword>
<keyword id="KW-0007">Acetylation</keyword>
<keyword id="KW-1003">Cell membrane</keyword>
<keyword id="KW-0963">Cytoplasm</keyword>
<keyword id="KW-0903">Direct protein sequencing</keyword>
<keyword id="KW-0443">Lipid metabolism</keyword>
<keyword id="KW-0472">Membrane</keyword>
<keyword id="KW-0521">NADP</keyword>
<keyword id="KW-0560">Oxidoreductase</keyword>
<keyword id="KW-0597">Phosphoprotein</keyword>
<keyword id="KW-1185">Reference proteome</keyword>
<accession>Q9JII6</accession>
<accession>Q9CQI5</accession>
<accession>Q9CQT8</accession>
<accession>Q9CT53</accession>
<accession>Q9D012</accession>
<accession>Q9D016</accession>
<accession>Q9D0I7</accession>
<accession>Q9D0P3</accession>
<dbReference type="EC" id="1.1.1.2" evidence="7 8"/>
<dbReference type="EC" id="1.1.1.372" evidence="9"/>
<dbReference type="EC" id="1.1.1.54" evidence="4"/>
<dbReference type="EC" id="1.1.1.19" evidence="7 8"/>
<dbReference type="EC" id="1.1.1.20" evidence="4"/>
<dbReference type="EC" id="1.6.-.-" evidence="10"/>
<dbReference type="EMBL" id="AF225564">
    <property type="protein sequence ID" value="AAF67111.1"/>
    <property type="molecule type" value="mRNA"/>
</dbReference>
<dbReference type="EMBL" id="AK011906">
    <property type="protein sequence ID" value="BAB27907.1"/>
    <property type="molecule type" value="mRNA"/>
</dbReference>
<dbReference type="EMBL" id="AK009462">
    <property type="protein sequence ID" value="BAB26303.1"/>
    <property type="molecule type" value="mRNA"/>
</dbReference>
<dbReference type="EMBL" id="AK011321">
    <property type="protein sequence ID" value="BAB27543.1"/>
    <property type="molecule type" value="mRNA"/>
</dbReference>
<dbReference type="EMBL" id="AK011794">
    <property type="protein sequence ID" value="BAB27846.1"/>
    <property type="molecule type" value="mRNA"/>
</dbReference>
<dbReference type="EMBL" id="AK011908">
    <property type="protein sequence ID" value="BAB27909.1"/>
    <property type="molecule type" value="mRNA"/>
</dbReference>
<dbReference type="EMBL" id="AK011918">
    <property type="protein sequence ID" value="BAB27915.1"/>
    <property type="molecule type" value="mRNA"/>
</dbReference>
<dbReference type="EMBL" id="AK011856">
    <property type="protein sequence ID" value="BAB27883.1"/>
    <property type="molecule type" value="mRNA"/>
</dbReference>
<dbReference type="EMBL" id="AK011667">
    <property type="protein sequence ID" value="BAB27767.1"/>
    <property type="molecule type" value="mRNA"/>
</dbReference>
<dbReference type="EMBL" id="AK011388">
    <property type="protein sequence ID" value="BAB27586.1"/>
    <property type="molecule type" value="mRNA"/>
</dbReference>
<dbReference type="EMBL" id="AK011157">
    <property type="protein sequence ID" value="BAB27437.1"/>
    <property type="molecule type" value="mRNA"/>
</dbReference>
<dbReference type="EMBL" id="AK011209">
    <property type="protein sequence ID" value="BAB27469.1"/>
    <property type="molecule type" value="mRNA"/>
</dbReference>
<dbReference type="EMBL" id="AK005162">
    <property type="protein sequence ID" value="BAB23853.1"/>
    <property type="molecule type" value="mRNA"/>
</dbReference>
<dbReference type="EMBL" id="AK011221">
    <property type="status" value="NOT_ANNOTATED_CDS"/>
    <property type="molecule type" value="mRNA"/>
</dbReference>
<dbReference type="EMBL" id="BC039926">
    <property type="protein sequence ID" value="AAH39926.1"/>
    <property type="molecule type" value="mRNA"/>
</dbReference>
<dbReference type="CCDS" id="CCDS18514.1"/>
<dbReference type="RefSeq" id="NP_067448.1">
    <property type="nucleotide sequence ID" value="NM_021473.3"/>
</dbReference>
<dbReference type="PDB" id="4GAC">
    <property type="method" value="X-ray"/>
    <property type="resolution" value="1.64 A"/>
    <property type="chains" value="A/B=2-325"/>
</dbReference>
<dbReference type="PDBsum" id="4GAC"/>
<dbReference type="SMR" id="Q9JII6"/>
<dbReference type="FunCoup" id="Q9JII6">
    <property type="interactions" value="1447"/>
</dbReference>
<dbReference type="IntAct" id="Q9JII6">
    <property type="interactions" value="2"/>
</dbReference>
<dbReference type="STRING" id="10090.ENSMUSP00000030455"/>
<dbReference type="GlyGen" id="Q9JII6">
    <property type="glycosylation" value="1 site, 1 O-linked glycan (1 site)"/>
</dbReference>
<dbReference type="iPTMnet" id="Q9JII6"/>
<dbReference type="PhosphoSitePlus" id="Q9JII6"/>
<dbReference type="SwissPalm" id="Q9JII6"/>
<dbReference type="REPRODUCTION-2DPAGE" id="IPI00466128"/>
<dbReference type="REPRODUCTION-2DPAGE" id="Q9JII6"/>
<dbReference type="CPTAC" id="non-CPTAC-3762"/>
<dbReference type="jPOST" id="Q9JII6"/>
<dbReference type="PaxDb" id="10090-ENSMUSP00000030455"/>
<dbReference type="ProteomicsDB" id="296148"/>
<dbReference type="Pumba" id="Q9JII6"/>
<dbReference type="Antibodypedia" id="3338">
    <property type="antibodies" value="593 antibodies from 36 providers"/>
</dbReference>
<dbReference type="DNASU" id="58810"/>
<dbReference type="Ensembl" id="ENSMUST00000030455.15">
    <property type="protein sequence ID" value="ENSMUSP00000030455.9"/>
    <property type="gene ID" value="ENSMUSG00000028692.15"/>
</dbReference>
<dbReference type="GeneID" id="58810"/>
<dbReference type="KEGG" id="mmu:58810"/>
<dbReference type="UCSC" id="uc008uha.2">
    <property type="organism name" value="mouse"/>
</dbReference>
<dbReference type="AGR" id="MGI:1929955"/>
<dbReference type="CTD" id="10327"/>
<dbReference type="MGI" id="MGI:1929955">
    <property type="gene designation" value="Akr1a1"/>
</dbReference>
<dbReference type="VEuPathDB" id="HostDB:ENSMUSG00000028692"/>
<dbReference type="eggNOG" id="KOG1577">
    <property type="taxonomic scope" value="Eukaryota"/>
</dbReference>
<dbReference type="GeneTree" id="ENSGT00940000156539"/>
<dbReference type="HOGENOM" id="CLU_023205_0_0_1"/>
<dbReference type="InParanoid" id="Q9JII6"/>
<dbReference type="OMA" id="MVNQIFL"/>
<dbReference type="OrthoDB" id="416253at2759"/>
<dbReference type="PhylomeDB" id="Q9JII6"/>
<dbReference type="TreeFam" id="TF106492"/>
<dbReference type="BRENDA" id="1.1.1.2">
    <property type="organism ID" value="3474"/>
</dbReference>
<dbReference type="Reactome" id="R-MMU-156590">
    <property type="pathway name" value="Glutathione conjugation"/>
</dbReference>
<dbReference type="Reactome" id="R-MMU-5661270">
    <property type="pathway name" value="Formation of xylulose-5-phosphate"/>
</dbReference>
<dbReference type="SABIO-RK" id="Q9JII6"/>
<dbReference type="BioGRID-ORCS" id="58810">
    <property type="hits" value="1 hit in 80 CRISPR screens"/>
</dbReference>
<dbReference type="ChiTaRS" id="Akr1a1">
    <property type="organism name" value="mouse"/>
</dbReference>
<dbReference type="EvolutionaryTrace" id="Q9JII6"/>
<dbReference type="PRO" id="PR:Q9JII6"/>
<dbReference type="Proteomes" id="UP000000589">
    <property type="component" value="Chromosome 4"/>
</dbReference>
<dbReference type="RNAct" id="Q9JII6">
    <property type="molecule type" value="protein"/>
</dbReference>
<dbReference type="Bgee" id="ENSMUSG00000028692">
    <property type="expression patterns" value="Expressed in metanephric mesenchyme and 280 other cell types or tissues"/>
</dbReference>
<dbReference type="ExpressionAtlas" id="Q9JII6">
    <property type="expression patterns" value="baseline and differential"/>
</dbReference>
<dbReference type="GO" id="GO:0016324">
    <property type="term" value="C:apical plasma membrane"/>
    <property type="evidence" value="ECO:0000314"/>
    <property type="project" value="MGI"/>
</dbReference>
<dbReference type="GO" id="GO:0005829">
    <property type="term" value="C:cytosol"/>
    <property type="evidence" value="ECO:0000314"/>
    <property type="project" value="MGI"/>
</dbReference>
<dbReference type="GO" id="GO:0045202">
    <property type="term" value="C:synapse"/>
    <property type="evidence" value="ECO:0000314"/>
    <property type="project" value="SynGO"/>
</dbReference>
<dbReference type="GO" id="GO:0008106">
    <property type="term" value="F:alcohol dehydrogenase (NADP+) activity"/>
    <property type="evidence" value="ECO:0000303"/>
    <property type="project" value="UniProtKB"/>
</dbReference>
<dbReference type="GO" id="GO:0004032">
    <property type="term" value="F:aldose reductase (NADPH) activity"/>
    <property type="evidence" value="ECO:0000314"/>
    <property type="project" value="MGI"/>
</dbReference>
<dbReference type="GO" id="GO:0047655">
    <property type="term" value="F:allyl-alcohol dehydrogenase activity"/>
    <property type="evidence" value="ECO:0007669"/>
    <property type="project" value="UniProtKB-EC"/>
</dbReference>
<dbReference type="GO" id="GO:0047941">
    <property type="term" value="F:glucuronolactone reductase activity"/>
    <property type="evidence" value="ECO:0000314"/>
    <property type="project" value="UniProtKB"/>
</dbReference>
<dbReference type="GO" id="GO:0047956">
    <property type="term" value="F:glycerol dehydrogenase (NADP+) activity"/>
    <property type="evidence" value="ECO:0007669"/>
    <property type="project" value="RHEA"/>
</dbReference>
<dbReference type="GO" id="GO:0047939">
    <property type="term" value="F:L-glucuronate reductase activity"/>
    <property type="evidence" value="ECO:0000314"/>
    <property type="project" value="MGI"/>
</dbReference>
<dbReference type="GO" id="GO:1990002">
    <property type="term" value="F:methylglyoxal reductase (NADPH) (acetol producing) activity"/>
    <property type="evidence" value="ECO:0007669"/>
    <property type="project" value="RHEA"/>
</dbReference>
<dbReference type="GO" id="GO:0080007">
    <property type="term" value="F:S-nitrosoglutathione reductase (NADH) activity"/>
    <property type="evidence" value="ECO:0000315"/>
    <property type="project" value="MGI"/>
</dbReference>
<dbReference type="GO" id="GO:0160163">
    <property type="term" value="F:S-nitrosoglutathione reductase (NADPH) activity"/>
    <property type="evidence" value="ECO:0007669"/>
    <property type="project" value="RHEA"/>
</dbReference>
<dbReference type="GO" id="GO:0046185">
    <property type="term" value="P:aldehyde catabolic process"/>
    <property type="evidence" value="ECO:0000314"/>
    <property type="project" value="MGI"/>
</dbReference>
<dbReference type="GO" id="GO:0110095">
    <property type="term" value="P:cellular detoxification of aldehyde"/>
    <property type="evidence" value="ECO:0000315"/>
    <property type="project" value="UniProtKB"/>
</dbReference>
<dbReference type="GO" id="GO:0042840">
    <property type="term" value="P:D-glucuronate catabolic process"/>
    <property type="evidence" value="ECO:0000314"/>
    <property type="project" value="MGI"/>
</dbReference>
<dbReference type="GO" id="GO:0019640">
    <property type="term" value="P:D-glucuronate catabolic process to D-xylulose 5-phosphate"/>
    <property type="evidence" value="ECO:0000314"/>
    <property type="project" value="MGI"/>
</dbReference>
<dbReference type="GO" id="GO:0044597">
    <property type="term" value="P:daunorubicin metabolic process"/>
    <property type="evidence" value="ECO:0007669"/>
    <property type="project" value="Ensembl"/>
</dbReference>
<dbReference type="GO" id="GO:0044598">
    <property type="term" value="P:doxorubicin metabolic process"/>
    <property type="evidence" value="ECO:0007669"/>
    <property type="project" value="Ensembl"/>
</dbReference>
<dbReference type="GO" id="GO:0019853">
    <property type="term" value="P:L-ascorbic acid biosynthetic process"/>
    <property type="evidence" value="ECO:0000314"/>
    <property type="project" value="MGI"/>
</dbReference>
<dbReference type="GO" id="GO:0006629">
    <property type="term" value="P:lipid metabolic process"/>
    <property type="evidence" value="ECO:0007669"/>
    <property type="project" value="UniProtKB-KW"/>
</dbReference>
<dbReference type="GO" id="GO:0043066">
    <property type="term" value="P:negative regulation of apoptotic process"/>
    <property type="evidence" value="ECO:0007669"/>
    <property type="project" value="Ensembl"/>
</dbReference>
<dbReference type="CDD" id="cd19106">
    <property type="entry name" value="AKR_AKR1A1-4"/>
    <property type="match status" value="1"/>
</dbReference>
<dbReference type="FunFam" id="3.20.20.100:FF:000006">
    <property type="entry name" value="Aldo-keto reductase family 1 member A1"/>
    <property type="match status" value="1"/>
</dbReference>
<dbReference type="Gene3D" id="3.20.20.100">
    <property type="entry name" value="NADP-dependent oxidoreductase domain"/>
    <property type="match status" value="1"/>
</dbReference>
<dbReference type="InterPro" id="IPR020471">
    <property type="entry name" value="AKR"/>
</dbReference>
<dbReference type="InterPro" id="IPR044481">
    <property type="entry name" value="AKR1A"/>
</dbReference>
<dbReference type="InterPro" id="IPR018170">
    <property type="entry name" value="Aldo/ket_reductase_CS"/>
</dbReference>
<dbReference type="InterPro" id="IPR023210">
    <property type="entry name" value="NADP_OxRdtase_dom"/>
</dbReference>
<dbReference type="InterPro" id="IPR036812">
    <property type="entry name" value="NADP_OxRdtase_dom_sf"/>
</dbReference>
<dbReference type="PANTHER" id="PTHR11732">
    <property type="entry name" value="ALDO/KETO REDUCTASE"/>
    <property type="match status" value="1"/>
</dbReference>
<dbReference type="Pfam" id="PF00248">
    <property type="entry name" value="Aldo_ket_red"/>
    <property type="match status" value="1"/>
</dbReference>
<dbReference type="PIRSF" id="PIRSF000097">
    <property type="entry name" value="AKR"/>
    <property type="match status" value="1"/>
</dbReference>
<dbReference type="PRINTS" id="PR00069">
    <property type="entry name" value="ALDKETRDTASE"/>
</dbReference>
<dbReference type="SUPFAM" id="SSF51430">
    <property type="entry name" value="NAD(P)-linked oxidoreductase"/>
    <property type="match status" value="1"/>
</dbReference>
<dbReference type="PROSITE" id="PS00798">
    <property type="entry name" value="ALDOKETO_REDUCTASE_1"/>
    <property type="match status" value="1"/>
</dbReference>
<dbReference type="PROSITE" id="PS00062">
    <property type="entry name" value="ALDOKETO_REDUCTASE_2"/>
    <property type="match status" value="1"/>
</dbReference>
<dbReference type="PROSITE" id="PS00063">
    <property type="entry name" value="ALDOKETO_REDUCTASE_3"/>
    <property type="match status" value="1"/>
</dbReference>
<proteinExistence type="evidence at protein level"/>
<comment type="function">
    <text evidence="2 3 4 7 8 9 10 11 12">Catalyzes the NADPH-dependent reduction of a wide variety of carbonyl-containing compounds to their corresponding alcohols (PubMed:15769935, PubMed:20410296, PubMed:22820017). Displays enzymatic activity towards endogenous metabolites such as aromatic and aliphatic aldehydes, ketones, monosaccharides and bile acids, with a preference for negatively charged substrates, such as glucuronate and succinic semialdehyde (PubMed:15769935, PubMed:20410296, PubMed:22820017). Plays an important role in ascorbic acid biosynthesis by catalyzing the reduction of D-glucuronic acid and D-glucurono-gamma-lactone (PubMed:15769935, PubMed:20410296, PubMed:22820017). Functions as a detoxifiying enzyme by reducing a range of toxic aldehydes (By similarity). Reduces methylglyoxal and 3-deoxyglucosone, which are present at elevated levels under hyperglycemic conditions and are cytotoxic (By similarity). Involved in the detoxification of lipid-derived aldehydes like acrolein (By similarity). Plays a role in the activation of procarcinogens, such as polycyclic aromatic hydrocarbon trans-dihydrodiols, and in the metabolism of various xenobiotics and drugs (By similarity). Also acts as an inhibitor of protein S-nitrosylation by mediating degradation of S-nitroso-coenzyme A (S-nitroso-CoA), a cofactor required to S-nitrosylate proteins (PubMed:25512491, PubMed:30487609). S-nitroso-CoA reductase activity is involved in reprogramming intermediary metabolism in renal proximal tubules, notably by inhibiting protein S-nitrosylation of isoform 2 of PKM (PKM2) (PubMed:30487609). Also acts as a S-nitroso-glutathione reductase by catalyzing the NADPH-dependent reduction of S-nitrosoglutathione (PubMed:31649033). Displays no reductase activity towards retinoids (By similarity).</text>
</comment>
<comment type="catalytic activity">
    <reaction evidence="8">
        <text>a primary alcohol + NADP(+) = an aldehyde + NADPH + H(+)</text>
        <dbReference type="Rhea" id="RHEA:15937"/>
        <dbReference type="ChEBI" id="CHEBI:15378"/>
        <dbReference type="ChEBI" id="CHEBI:15734"/>
        <dbReference type="ChEBI" id="CHEBI:17478"/>
        <dbReference type="ChEBI" id="CHEBI:57783"/>
        <dbReference type="ChEBI" id="CHEBI:58349"/>
        <dbReference type="EC" id="1.1.1.2"/>
    </reaction>
</comment>
<comment type="catalytic activity">
    <reaction evidence="7 8 9">
        <text>L-gulonate + NADP(+) = aldehydo-D-glucuronate + NADPH + H(+)</text>
        <dbReference type="Rhea" id="RHEA:14909"/>
        <dbReference type="ChEBI" id="CHEBI:13115"/>
        <dbReference type="ChEBI" id="CHEBI:15378"/>
        <dbReference type="ChEBI" id="CHEBI:57783"/>
        <dbReference type="ChEBI" id="CHEBI:58349"/>
        <dbReference type="ChEBI" id="CHEBI:142686"/>
        <dbReference type="EC" id="1.1.1.19"/>
    </reaction>
</comment>
<comment type="catalytic activity">
    <reaction evidence="9">
        <text>L-gulono-1,4-lactone + NADP(+) = D-glucurono-3,6-lactone + NADPH + H(+)</text>
        <dbReference type="Rhea" id="RHEA:18925"/>
        <dbReference type="ChEBI" id="CHEBI:15378"/>
        <dbReference type="ChEBI" id="CHEBI:17587"/>
        <dbReference type="ChEBI" id="CHEBI:18268"/>
        <dbReference type="ChEBI" id="CHEBI:57783"/>
        <dbReference type="ChEBI" id="CHEBI:58349"/>
        <dbReference type="EC" id="1.1.1.20"/>
    </reaction>
</comment>
<comment type="catalytic activity">
    <reaction evidence="4">
        <text>allyl alcohol + NADP(+) = acrolein + NADPH + H(+)</text>
        <dbReference type="Rhea" id="RHEA:12168"/>
        <dbReference type="ChEBI" id="CHEBI:15368"/>
        <dbReference type="ChEBI" id="CHEBI:15378"/>
        <dbReference type="ChEBI" id="CHEBI:16605"/>
        <dbReference type="ChEBI" id="CHEBI:57783"/>
        <dbReference type="ChEBI" id="CHEBI:58349"/>
        <dbReference type="EC" id="1.1.1.54"/>
    </reaction>
</comment>
<comment type="catalytic activity">
    <reaction evidence="9">
        <text>glycerol + NADP(+) = D-glyceraldehyde + NADPH + H(+)</text>
        <dbReference type="Rhea" id="RHEA:23592"/>
        <dbReference type="ChEBI" id="CHEBI:15378"/>
        <dbReference type="ChEBI" id="CHEBI:17378"/>
        <dbReference type="ChEBI" id="CHEBI:17754"/>
        <dbReference type="ChEBI" id="CHEBI:57783"/>
        <dbReference type="ChEBI" id="CHEBI:58349"/>
        <dbReference type="EC" id="1.1.1.372"/>
    </reaction>
</comment>
<comment type="catalytic activity">
    <reaction evidence="9">
        <text>glycerol + NADP(+) = L-glyceraldehyde + NADPH + H(+)</text>
        <dbReference type="Rhea" id="RHEA:38111"/>
        <dbReference type="ChEBI" id="CHEBI:15378"/>
        <dbReference type="ChEBI" id="CHEBI:17754"/>
        <dbReference type="ChEBI" id="CHEBI:27975"/>
        <dbReference type="ChEBI" id="CHEBI:57783"/>
        <dbReference type="ChEBI" id="CHEBI:58349"/>
        <dbReference type="EC" id="1.1.1.372"/>
    </reaction>
</comment>
<comment type="catalytic activity">
    <reaction evidence="4">
        <text>hydroxyacetone + NADP(+) = methylglyoxal + NADPH + H(+)</text>
        <dbReference type="Rhea" id="RHEA:27986"/>
        <dbReference type="ChEBI" id="CHEBI:15378"/>
        <dbReference type="ChEBI" id="CHEBI:17158"/>
        <dbReference type="ChEBI" id="CHEBI:27957"/>
        <dbReference type="ChEBI" id="CHEBI:57783"/>
        <dbReference type="ChEBI" id="CHEBI:58349"/>
    </reaction>
</comment>
<comment type="catalytic activity">
    <reaction evidence="4">
        <text>3-deoxyfructose + NADP(+) = 3-deoxyglucosone + NADPH + H(+)</text>
        <dbReference type="Rhea" id="RHEA:58668"/>
        <dbReference type="ChEBI" id="CHEBI:15378"/>
        <dbReference type="ChEBI" id="CHEBI:57783"/>
        <dbReference type="ChEBI" id="CHEBI:58349"/>
        <dbReference type="ChEBI" id="CHEBI:60777"/>
        <dbReference type="ChEBI" id="CHEBI:142685"/>
    </reaction>
</comment>
<comment type="catalytic activity">
    <reaction evidence="4">
        <text>(R)-mevalonate + NADP(+) = (R)-mevaldate + NADPH + H(+)</text>
        <dbReference type="Rhea" id="RHEA:20193"/>
        <dbReference type="ChEBI" id="CHEBI:15378"/>
        <dbReference type="ChEBI" id="CHEBI:36464"/>
        <dbReference type="ChEBI" id="CHEBI:57783"/>
        <dbReference type="ChEBI" id="CHEBI:58349"/>
        <dbReference type="ChEBI" id="CHEBI:195523"/>
    </reaction>
</comment>
<comment type="catalytic activity">
    <reaction evidence="4">
        <text>pyridine 3-methanol + NADP(+) = pyridine-3-carbaldehyde + NADPH + H(+)</text>
        <dbReference type="Rhea" id="RHEA:58776"/>
        <dbReference type="ChEBI" id="CHEBI:15378"/>
        <dbReference type="ChEBI" id="CHEBI:28345"/>
        <dbReference type="ChEBI" id="CHEBI:45213"/>
        <dbReference type="ChEBI" id="CHEBI:57783"/>
        <dbReference type="ChEBI" id="CHEBI:58349"/>
    </reaction>
</comment>
<comment type="catalytic activity">
    <reaction evidence="10 11">
        <text>S-nitroso-CoA + NADPH + H(+) = sulfinamide-CoA + NADP(+)</text>
        <dbReference type="Rhea" id="RHEA:78375"/>
        <dbReference type="ChEBI" id="CHEBI:15378"/>
        <dbReference type="ChEBI" id="CHEBI:57783"/>
        <dbReference type="ChEBI" id="CHEBI:58349"/>
        <dbReference type="ChEBI" id="CHEBI:145546"/>
        <dbReference type="ChEBI" id="CHEBI:145548"/>
    </reaction>
    <physiologicalReaction direction="left-to-right" evidence="10 11">
        <dbReference type="Rhea" id="RHEA:78376"/>
    </physiologicalReaction>
</comment>
<comment type="catalytic activity">
    <reaction evidence="12">
        <text>S-nitrosoglutathione + NADPH + H(+) = S-(hydroxysulfenamide)glutathione + NADP(+)</text>
        <dbReference type="Rhea" id="RHEA:63500"/>
        <dbReference type="ChEBI" id="CHEBI:15378"/>
        <dbReference type="ChEBI" id="CHEBI:57783"/>
        <dbReference type="ChEBI" id="CHEBI:58349"/>
        <dbReference type="ChEBI" id="CHEBI:145544"/>
        <dbReference type="ChEBI" id="CHEBI:229723"/>
    </reaction>
</comment>
<comment type="biophysicochemical properties">
    <kinetics>
        <KM evidence="8">5 mM for D-glucuronate</KM>
    </kinetics>
</comment>
<comment type="subunit">
    <text evidence="3">Monomer.</text>
</comment>
<comment type="subcellular location">
    <subcellularLocation>
        <location evidence="7">Cytoplasm</location>
        <location evidence="7">Cytosol</location>
    </subcellularLocation>
    <subcellularLocation>
        <location evidence="7">Apical cell membrane</location>
    </subcellularLocation>
</comment>
<comment type="tissue specificity">
    <text evidence="5 7">Widely expressed.</text>
</comment>
<comment type="developmental stage">
    <text evidence="5">Detected at high levels in several tissues including neural ectoderm, gut endoderm, somites, branchial arches, otic vesicles, limb buds and tail bud.</text>
</comment>
<comment type="induction">
    <text evidence="6">Fear memory increases expression 7-fold.</text>
</comment>
<comment type="disruption phenotype">
    <text evidence="8 9 10 11">Deficient mice develop and grow normally but suffer severe osteopenia and spontaneous fractures with stresses that increase ascorbic acid requirements, such as pregnancy or castration (PubMed:20410296). Deficient mice exhibit reduced asorbic acid and D,L-glyceraldehyde levels. The activities of glucuronate reductase and glucuronolactone reductase, which are involved in ascorbic acid biosynthesis, are suppressed in AKR1A knockout mice (PubMed:20410296, PubMed:22820017). Strongly decreased reduction of S-nitroso-coenzyme A (S-nitroso-CoA), leading to increased S-nitrosylation of proteins (PubMed:25512491, PubMed:30487609). Mice are protected against acute kidney injury (PubMed:30487609).</text>
</comment>
<comment type="similarity">
    <text evidence="17">Belongs to the aldo/keto reductase family.</text>
</comment>
<protein>
    <recommendedName>
        <fullName>Aldo-keto reductase family 1 member A1</fullName>
        <ecNumber evidence="7 8">1.1.1.2</ecNumber>
        <ecNumber evidence="9">1.1.1.372</ecNumber>
        <ecNumber evidence="4">1.1.1.54</ecNumber>
    </recommendedName>
    <alternativeName>
        <fullName>Alcohol dehydrogenase [NADP(+)]</fullName>
    </alternativeName>
    <alternativeName>
        <fullName>Aldehyde reductase</fullName>
    </alternativeName>
    <alternativeName>
        <fullName>Glucuronate reductase</fullName>
        <ecNumber evidence="7 8">1.1.1.19</ecNumber>
    </alternativeName>
    <alternativeName>
        <fullName evidence="4">Glucuronolactone reductase</fullName>
        <ecNumber evidence="4">1.1.1.20</ecNumber>
    </alternativeName>
    <alternativeName>
        <fullName evidence="15">S-nitroso-CoA reductase</fullName>
        <shortName evidence="16">ScorR</shortName>
        <ecNumber evidence="10">1.6.-.-</ecNumber>
    </alternativeName>
</protein>
<reference key="1">
    <citation type="journal article" date="2000" name="Mech. Dev.">
        <title>Cloning and developmental expression of mouse aldehyde reductase (AKR1A4).</title>
        <authorList>
            <person name="Allan D."/>
            <person name="Lohnes D."/>
        </authorList>
    </citation>
    <scope>NUCLEOTIDE SEQUENCE [MRNA]</scope>
    <scope>TISSUE SPECIFICITY</scope>
    <scope>DEVELOPMENTAL STAGE</scope>
    <source>
        <tissue>Embryo</tissue>
    </source>
</reference>
<reference key="2">
    <citation type="journal article" date="2005" name="Science">
        <title>The transcriptional landscape of the mammalian genome.</title>
        <authorList>
            <person name="Carninci P."/>
            <person name="Kasukawa T."/>
            <person name="Katayama S."/>
            <person name="Gough J."/>
            <person name="Frith M.C."/>
            <person name="Maeda N."/>
            <person name="Oyama R."/>
            <person name="Ravasi T."/>
            <person name="Lenhard B."/>
            <person name="Wells C."/>
            <person name="Kodzius R."/>
            <person name="Shimokawa K."/>
            <person name="Bajic V.B."/>
            <person name="Brenner S.E."/>
            <person name="Batalov S."/>
            <person name="Forrest A.R."/>
            <person name="Zavolan M."/>
            <person name="Davis M.J."/>
            <person name="Wilming L.G."/>
            <person name="Aidinis V."/>
            <person name="Allen J.E."/>
            <person name="Ambesi-Impiombato A."/>
            <person name="Apweiler R."/>
            <person name="Aturaliya R.N."/>
            <person name="Bailey T.L."/>
            <person name="Bansal M."/>
            <person name="Baxter L."/>
            <person name="Beisel K.W."/>
            <person name="Bersano T."/>
            <person name="Bono H."/>
            <person name="Chalk A.M."/>
            <person name="Chiu K.P."/>
            <person name="Choudhary V."/>
            <person name="Christoffels A."/>
            <person name="Clutterbuck D.R."/>
            <person name="Crowe M.L."/>
            <person name="Dalla E."/>
            <person name="Dalrymple B.P."/>
            <person name="de Bono B."/>
            <person name="Della Gatta G."/>
            <person name="di Bernardo D."/>
            <person name="Down T."/>
            <person name="Engstrom P."/>
            <person name="Fagiolini M."/>
            <person name="Faulkner G."/>
            <person name="Fletcher C.F."/>
            <person name="Fukushima T."/>
            <person name="Furuno M."/>
            <person name="Futaki S."/>
            <person name="Gariboldi M."/>
            <person name="Georgii-Hemming P."/>
            <person name="Gingeras T.R."/>
            <person name="Gojobori T."/>
            <person name="Green R.E."/>
            <person name="Gustincich S."/>
            <person name="Harbers M."/>
            <person name="Hayashi Y."/>
            <person name="Hensch T.K."/>
            <person name="Hirokawa N."/>
            <person name="Hill D."/>
            <person name="Huminiecki L."/>
            <person name="Iacono M."/>
            <person name="Ikeo K."/>
            <person name="Iwama A."/>
            <person name="Ishikawa T."/>
            <person name="Jakt M."/>
            <person name="Kanapin A."/>
            <person name="Katoh M."/>
            <person name="Kawasawa Y."/>
            <person name="Kelso J."/>
            <person name="Kitamura H."/>
            <person name="Kitano H."/>
            <person name="Kollias G."/>
            <person name="Krishnan S.P."/>
            <person name="Kruger A."/>
            <person name="Kummerfeld S.K."/>
            <person name="Kurochkin I.V."/>
            <person name="Lareau L.F."/>
            <person name="Lazarevic D."/>
            <person name="Lipovich L."/>
            <person name="Liu J."/>
            <person name="Liuni S."/>
            <person name="McWilliam S."/>
            <person name="Madan Babu M."/>
            <person name="Madera M."/>
            <person name="Marchionni L."/>
            <person name="Matsuda H."/>
            <person name="Matsuzawa S."/>
            <person name="Miki H."/>
            <person name="Mignone F."/>
            <person name="Miyake S."/>
            <person name="Morris K."/>
            <person name="Mottagui-Tabar S."/>
            <person name="Mulder N."/>
            <person name="Nakano N."/>
            <person name="Nakauchi H."/>
            <person name="Ng P."/>
            <person name="Nilsson R."/>
            <person name="Nishiguchi S."/>
            <person name="Nishikawa S."/>
            <person name="Nori F."/>
            <person name="Ohara O."/>
            <person name="Okazaki Y."/>
            <person name="Orlando V."/>
            <person name="Pang K.C."/>
            <person name="Pavan W.J."/>
            <person name="Pavesi G."/>
            <person name="Pesole G."/>
            <person name="Petrovsky N."/>
            <person name="Piazza S."/>
            <person name="Reed J."/>
            <person name="Reid J.F."/>
            <person name="Ring B.Z."/>
            <person name="Ringwald M."/>
            <person name="Rost B."/>
            <person name="Ruan Y."/>
            <person name="Salzberg S.L."/>
            <person name="Sandelin A."/>
            <person name="Schneider C."/>
            <person name="Schoenbach C."/>
            <person name="Sekiguchi K."/>
            <person name="Semple C.A."/>
            <person name="Seno S."/>
            <person name="Sessa L."/>
            <person name="Sheng Y."/>
            <person name="Shibata Y."/>
            <person name="Shimada H."/>
            <person name="Shimada K."/>
            <person name="Silva D."/>
            <person name="Sinclair B."/>
            <person name="Sperling S."/>
            <person name="Stupka E."/>
            <person name="Sugiura K."/>
            <person name="Sultana R."/>
            <person name="Takenaka Y."/>
            <person name="Taki K."/>
            <person name="Tammoja K."/>
            <person name="Tan S.L."/>
            <person name="Tang S."/>
            <person name="Taylor M.S."/>
            <person name="Tegner J."/>
            <person name="Teichmann S.A."/>
            <person name="Ueda H.R."/>
            <person name="van Nimwegen E."/>
            <person name="Verardo R."/>
            <person name="Wei C.L."/>
            <person name="Yagi K."/>
            <person name="Yamanishi H."/>
            <person name="Zabarovsky E."/>
            <person name="Zhu S."/>
            <person name="Zimmer A."/>
            <person name="Hide W."/>
            <person name="Bult C."/>
            <person name="Grimmond S.M."/>
            <person name="Teasdale R.D."/>
            <person name="Liu E.T."/>
            <person name="Brusic V."/>
            <person name="Quackenbush J."/>
            <person name="Wahlestedt C."/>
            <person name="Mattick J.S."/>
            <person name="Hume D.A."/>
            <person name="Kai C."/>
            <person name="Sasaki D."/>
            <person name="Tomaru Y."/>
            <person name="Fukuda S."/>
            <person name="Kanamori-Katayama M."/>
            <person name="Suzuki M."/>
            <person name="Aoki J."/>
            <person name="Arakawa T."/>
            <person name="Iida J."/>
            <person name="Imamura K."/>
            <person name="Itoh M."/>
            <person name="Kato T."/>
            <person name="Kawaji H."/>
            <person name="Kawagashira N."/>
            <person name="Kawashima T."/>
            <person name="Kojima M."/>
            <person name="Kondo S."/>
            <person name="Konno H."/>
            <person name="Nakano K."/>
            <person name="Ninomiya N."/>
            <person name="Nishio T."/>
            <person name="Okada M."/>
            <person name="Plessy C."/>
            <person name="Shibata K."/>
            <person name="Shiraki T."/>
            <person name="Suzuki S."/>
            <person name="Tagami M."/>
            <person name="Waki K."/>
            <person name="Watahiki A."/>
            <person name="Okamura-Oho Y."/>
            <person name="Suzuki H."/>
            <person name="Kawai J."/>
            <person name="Hayashizaki Y."/>
        </authorList>
    </citation>
    <scope>NUCLEOTIDE SEQUENCE [LARGE SCALE MRNA]</scope>
    <source>
        <strain>C57BL/6J</strain>
        <tissue>Cerebellum</tissue>
        <tissue>Embryo</tissue>
        <tissue>Tongue</tissue>
    </source>
</reference>
<reference key="3">
    <citation type="journal article" date="2004" name="Genome Res.">
        <title>The status, quality, and expansion of the NIH full-length cDNA project: the Mammalian Gene Collection (MGC).</title>
        <authorList>
            <consortium name="The MGC Project Team"/>
        </authorList>
    </citation>
    <scope>NUCLEOTIDE SEQUENCE [LARGE SCALE MRNA]</scope>
    <source>
        <strain>FVB/N</strain>
        <tissue>Mammary gland</tissue>
    </source>
</reference>
<reference key="4">
    <citation type="submission" date="2005-07" db="UniProtKB">
        <authorList>
            <person name="Bienvenut W.V."/>
        </authorList>
    </citation>
    <scope>PROTEIN SEQUENCE OF 2-13 AND 244-251</scope>
    <scope>CLEAVAGE OF INITIATOR METHIONINE</scope>
    <scope>ACETYLATION AT THR-2</scope>
    <scope>IDENTIFICATION BY MASS SPECTROMETRY</scope>
    <source>
        <strain>C57BL/6J</strain>
        <tissue>Liver</tissue>
    </source>
</reference>
<reference key="5">
    <citation type="submission" date="2007-03" db="UniProtKB">
        <authorList>
            <person name="Lubec G."/>
            <person name="Klug S."/>
        </authorList>
    </citation>
    <scope>PROTEIN SEQUENCE OF 204-218; 222-240 AND 313-325</scope>
    <scope>IDENTIFICATION BY MASS SPECTROMETRY</scope>
    <source>
        <tissue>Hippocampus</tissue>
    </source>
</reference>
<reference key="6">
    <citation type="journal article" date="2001" name="Learn. Memory">
        <title>Identification of genes expressed in the amygdala during the formation of fear memory.</title>
        <authorList>
            <person name="Stork O."/>
            <person name="Stork S."/>
            <person name="Pape H.-C."/>
            <person name="Obata K."/>
        </authorList>
    </citation>
    <scope>INDUCTION</scope>
</reference>
<reference key="7">
    <citation type="journal article" date="2005" name="Am. J. Physiol.">
        <title>Developmental expression and function of aldehyde reductase in proximal tubules of the kidney.</title>
        <authorList>
            <person name="Barski O.A."/>
            <person name="Papusha V.Z."/>
            <person name="Ivanova M.M."/>
            <person name="Rudman D.M."/>
            <person name="Finegold M.J."/>
        </authorList>
    </citation>
    <scope>TISSUE SPECIFICITY</scope>
    <scope>SUBCELLULAR LOCATION</scope>
    <scope>CATALYTIC ACTIVITY</scope>
    <scope>FUNCTION</scope>
</reference>
<reference key="8">
    <citation type="journal article" date="2010" name="Cell">
        <title>A tissue-specific atlas of mouse protein phosphorylation and expression.</title>
        <authorList>
            <person name="Huttlin E.L."/>
            <person name="Jedrychowski M.P."/>
            <person name="Elias J.E."/>
            <person name="Goswami T."/>
            <person name="Rad R."/>
            <person name="Beausoleil S.A."/>
            <person name="Villen J."/>
            <person name="Haas W."/>
            <person name="Sowa M.E."/>
            <person name="Gygi S.P."/>
        </authorList>
    </citation>
    <scope>IDENTIFICATION BY MASS SPECTROMETRY [LARGE SCALE ANALYSIS]</scope>
    <source>
        <tissue>Brain</tissue>
        <tissue>Brown adipose tissue</tissue>
        <tissue>Heart</tissue>
        <tissue>Kidney</tissue>
        <tissue>Liver</tissue>
        <tissue>Lung</tissue>
        <tissue>Pancreas</tissue>
        <tissue>Spleen</tissue>
        <tissue>Testis</tissue>
    </source>
</reference>
<reference key="9">
    <citation type="journal article" date="2010" name="J. Biol. Chem.">
        <title>Ascorbate synthesis pathway: dual role of ascorbate in bone homeostasis.</title>
        <authorList>
            <person name="Gabbay K.H."/>
            <person name="Bohren K.M."/>
            <person name="Morello R."/>
            <person name="Bertin T."/>
            <person name="Liu J."/>
            <person name="Vogel P."/>
        </authorList>
    </citation>
    <scope>DISRUPTION PHENOTYPE</scope>
    <scope>CATALYTIC ACTIVITY</scope>
    <scope>FUNCTION</scope>
    <scope>BIOPHYSICOCHEMICAL PROPERTIES</scope>
</reference>
<reference key="10">
    <citation type="journal article" date="2012" name="Biochim. Biophys. Acta">
        <title>In vivo role of aldehyde reductase.</title>
        <authorList>
            <person name="Takahashi M."/>
            <person name="Miyata S."/>
            <person name="Fujii J."/>
            <person name="Inai Y."/>
            <person name="Ueyama S."/>
            <person name="Araki M."/>
            <person name="Soga T."/>
            <person name="Fujinawa R."/>
            <person name="Nishitani C."/>
            <person name="Ariki S."/>
            <person name="Shimizu T."/>
            <person name="Abe T."/>
            <person name="Ihara Y."/>
            <person name="Nishikimi M."/>
            <person name="Kozutsumi Y."/>
            <person name="Taniguchi N."/>
            <person name="Kuroki Y."/>
        </authorList>
    </citation>
    <scope>DISRUPTION PHENOTYPE</scope>
    <scope>FUNCTION</scope>
    <scope>CATALYTIC ACTIVITY</scope>
</reference>
<reference key="11">
    <citation type="journal article" date="2013" name="Mol. Cell">
        <title>SIRT5-mediated lysine desuccinylation impacts diverse metabolic pathways.</title>
        <authorList>
            <person name="Park J."/>
            <person name="Chen Y."/>
            <person name="Tishkoff D.X."/>
            <person name="Peng C."/>
            <person name="Tan M."/>
            <person name="Dai L."/>
            <person name="Xie Z."/>
            <person name="Zhang Y."/>
            <person name="Zwaans B.M."/>
            <person name="Skinner M.E."/>
            <person name="Lombard D.B."/>
            <person name="Zhao Y."/>
        </authorList>
    </citation>
    <scope>ACETYLATION [LARGE SCALE ANALYSIS] AT LYS-127</scope>
    <scope>SUCCINYLATION [LARGE SCALE ANALYSIS] AT LYS-127 AND LYS-145</scope>
    <scope>IDENTIFICATION BY MASS SPECTROMETRY [LARGE SCALE ANALYSIS]</scope>
    <source>
        <tissue>Embryonic fibroblast</tissue>
        <tissue>Liver</tissue>
    </source>
</reference>
<reference key="12">
    <citation type="journal article" date="2014" name="Proc. Natl. Acad. Sci. U.S.A.">
        <title>Identification of S-nitroso-CoA reductases that regulate protein S-nitrosylation.</title>
        <authorList>
            <person name="Anand P."/>
            <person name="Hausladen A."/>
            <person name="Wang Y.J."/>
            <person name="Zhang G.F."/>
            <person name="Stomberski C."/>
            <person name="Brunengraber H."/>
            <person name="Hess D.T."/>
            <person name="Stamler J.S."/>
        </authorList>
    </citation>
    <scope>FUNCTION</scope>
    <scope>CATALYTIC ACTIVITY</scope>
    <scope>DISRUPTION PHENOTYPE</scope>
</reference>
<reference key="13">
    <citation type="journal article" date="2019" name="J. Biol. Chem.">
        <title>AKR1A1 is a novel mammalian S-nitroso-glutathione reductase.</title>
        <authorList>
            <person name="Stomberski C.T."/>
            <person name="Anand P."/>
            <person name="Venetos N.M."/>
            <person name="Hausladen A."/>
            <person name="Zhou H.L."/>
            <person name="Premont R.T."/>
            <person name="Stamler J.S."/>
        </authorList>
    </citation>
    <scope>FUNCTION</scope>
    <scope>CATALYTIC ACTIVITY</scope>
</reference>
<reference key="14">
    <citation type="journal article" date="2019" name="Nature">
        <title>Metabolic reprogramming by the S-nitroso-CoA reductase system protects against kidney injury.</title>
        <authorList>
            <person name="Zhou H.L."/>
            <person name="Zhang R."/>
            <person name="Anand P."/>
            <person name="Stomberski C.T."/>
            <person name="Qian Z."/>
            <person name="Hausladen A."/>
            <person name="Wang L."/>
            <person name="Rhee E.P."/>
            <person name="Parikh S.M."/>
            <person name="Karumanchi S.A."/>
            <person name="Stamler J.S."/>
        </authorList>
    </citation>
    <scope>FUNCTION</scope>
    <scope>CATALYTIC ACTIVITY</scope>
    <scope>DISRUPTION PHENOTYPE</scope>
</reference>